<evidence type="ECO:0000255" key="1">
    <source>
        <dbReference type="HAMAP-Rule" id="MF_00664"/>
    </source>
</evidence>
<name>PSD_CHLPM</name>
<protein>
    <recommendedName>
        <fullName evidence="1">Phosphatidylserine decarboxylase proenzyme</fullName>
        <ecNumber evidence="1">4.1.1.65</ecNumber>
    </recommendedName>
    <component>
        <recommendedName>
            <fullName evidence="1">Phosphatidylserine decarboxylase alpha chain</fullName>
        </recommendedName>
    </component>
    <component>
        <recommendedName>
            <fullName evidence="1">Phosphatidylserine decarboxylase beta chain</fullName>
        </recommendedName>
    </component>
</protein>
<reference key="1">
    <citation type="submission" date="2007-03" db="EMBL/GenBank/DDBJ databases">
        <title>Complete sequence of Prosthecochloris vibrioformis DSM 265.</title>
        <authorList>
            <consortium name="US DOE Joint Genome Institute"/>
            <person name="Copeland A."/>
            <person name="Lucas S."/>
            <person name="Lapidus A."/>
            <person name="Barry K."/>
            <person name="Detter J.C."/>
            <person name="Glavina del Rio T."/>
            <person name="Hammon N."/>
            <person name="Israni S."/>
            <person name="Pitluck S."/>
            <person name="Schmutz J."/>
            <person name="Larimer F."/>
            <person name="Land M."/>
            <person name="Hauser L."/>
            <person name="Mikhailova N."/>
            <person name="Li T."/>
            <person name="Overmann J."/>
            <person name="Schuster S.C."/>
            <person name="Bryant D.A."/>
            <person name="Richardson P."/>
        </authorList>
    </citation>
    <scope>NUCLEOTIDE SEQUENCE [LARGE SCALE GENOMIC DNA]</scope>
    <source>
        <strain>DSM 265 / 1930</strain>
    </source>
</reference>
<feature type="chain" id="PRO_1000082932" description="Phosphatidylserine decarboxylase beta chain" evidence="1">
    <location>
        <begin position="1"/>
        <end position="181"/>
    </location>
</feature>
<feature type="chain" id="PRO_1000082933" description="Phosphatidylserine decarboxylase alpha chain" evidence="1">
    <location>
        <begin position="182"/>
        <end position="219"/>
    </location>
</feature>
<feature type="active site" description="Schiff-base intermediate with substrate; via pyruvic acid" evidence="1">
    <location>
        <position position="182"/>
    </location>
</feature>
<feature type="site" description="Cleavage (non-hydrolytic); by autocatalysis" evidence="1">
    <location>
        <begin position="181"/>
        <end position="182"/>
    </location>
</feature>
<feature type="modified residue" description="Pyruvic acid (Ser); by autocatalysis" evidence="1">
    <location>
        <position position="182"/>
    </location>
</feature>
<dbReference type="EC" id="4.1.1.65" evidence="1"/>
<dbReference type="EMBL" id="CP000607">
    <property type="protein sequence ID" value="ABP37411.1"/>
    <property type="molecule type" value="Genomic_DNA"/>
</dbReference>
<dbReference type="STRING" id="290318.Cvib_1400"/>
<dbReference type="KEGG" id="pvi:Cvib_1400"/>
<dbReference type="eggNOG" id="COG0688">
    <property type="taxonomic scope" value="Bacteria"/>
</dbReference>
<dbReference type="HOGENOM" id="CLU_072492_2_0_10"/>
<dbReference type="OrthoDB" id="9790893at2"/>
<dbReference type="UniPathway" id="UPA00558">
    <property type="reaction ID" value="UER00616"/>
</dbReference>
<dbReference type="GO" id="GO:0005886">
    <property type="term" value="C:plasma membrane"/>
    <property type="evidence" value="ECO:0007669"/>
    <property type="project" value="UniProtKB-SubCell"/>
</dbReference>
<dbReference type="GO" id="GO:0004609">
    <property type="term" value="F:phosphatidylserine decarboxylase activity"/>
    <property type="evidence" value="ECO:0007669"/>
    <property type="project" value="UniProtKB-UniRule"/>
</dbReference>
<dbReference type="GO" id="GO:0006646">
    <property type="term" value="P:phosphatidylethanolamine biosynthetic process"/>
    <property type="evidence" value="ECO:0007669"/>
    <property type="project" value="UniProtKB-UniRule"/>
</dbReference>
<dbReference type="HAMAP" id="MF_00664">
    <property type="entry name" value="PS_decarb_PSD_A"/>
    <property type="match status" value="1"/>
</dbReference>
<dbReference type="InterPro" id="IPR003817">
    <property type="entry name" value="PS_Dcarbxylase"/>
</dbReference>
<dbReference type="InterPro" id="IPR033175">
    <property type="entry name" value="PSD-A"/>
</dbReference>
<dbReference type="NCBIfam" id="NF003682">
    <property type="entry name" value="PRK05305.2-2"/>
    <property type="match status" value="1"/>
</dbReference>
<dbReference type="NCBIfam" id="NF003685">
    <property type="entry name" value="PRK05305.2-5"/>
    <property type="match status" value="1"/>
</dbReference>
<dbReference type="PANTHER" id="PTHR35809">
    <property type="entry name" value="ARCHAETIDYLSERINE DECARBOXYLASE PROENZYME-RELATED"/>
    <property type="match status" value="1"/>
</dbReference>
<dbReference type="PANTHER" id="PTHR35809:SF1">
    <property type="entry name" value="ARCHAETIDYLSERINE DECARBOXYLASE PROENZYME-RELATED"/>
    <property type="match status" value="1"/>
</dbReference>
<dbReference type="Pfam" id="PF02666">
    <property type="entry name" value="PS_Dcarbxylase"/>
    <property type="match status" value="1"/>
</dbReference>
<gene>
    <name evidence="1" type="primary">psd</name>
    <name type="ordered locus">Cvib_1400</name>
</gene>
<keyword id="KW-1003">Cell membrane</keyword>
<keyword id="KW-0210">Decarboxylase</keyword>
<keyword id="KW-0444">Lipid biosynthesis</keyword>
<keyword id="KW-0443">Lipid metabolism</keyword>
<keyword id="KW-0456">Lyase</keyword>
<keyword id="KW-0472">Membrane</keyword>
<keyword id="KW-0594">Phospholipid biosynthesis</keyword>
<keyword id="KW-1208">Phospholipid metabolism</keyword>
<keyword id="KW-0670">Pyruvate</keyword>
<keyword id="KW-0865">Zymogen</keyword>
<proteinExistence type="inferred from homology"/>
<accession>A4SG02</accession>
<organism>
    <name type="scientific">Chlorobium phaeovibrioides (strain DSM 265 / 1930)</name>
    <name type="common">Prosthecochloris vibrioformis (strain DSM 265)</name>
    <dbReference type="NCBI Taxonomy" id="290318"/>
    <lineage>
        <taxon>Bacteria</taxon>
        <taxon>Pseudomonadati</taxon>
        <taxon>Chlorobiota</taxon>
        <taxon>Chlorobiia</taxon>
        <taxon>Chlorobiales</taxon>
        <taxon>Chlorobiaceae</taxon>
        <taxon>Chlorobium/Pelodictyon group</taxon>
        <taxon>Chlorobium</taxon>
    </lineage>
</organism>
<sequence length="219" mass="23349">MFTPYGMSTLVKLAAVSVGTLLFSILLPLQAAIPVGSAAAIFLIFSLWFFRDPNRSLPPGKGIVIAPADGTVMSIKACSHPFTGNGSSIISIFMSPLNVHVNRIPVTGTVTLLQHHPGSFSMAFDEKSGEENERMEIGIESNGMKLHFTQVAGFLARRIVCPLSLNEPVTAGKRFGMIKFGSRVDIVIPAGWLPEVKRGAKTRAGETIIARLATTAGNG</sequence>
<comment type="function">
    <text evidence="1">Catalyzes the formation of phosphatidylethanolamine (PtdEtn) from phosphatidylserine (PtdSer).</text>
</comment>
<comment type="catalytic activity">
    <reaction evidence="1">
        <text>a 1,2-diacyl-sn-glycero-3-phospho-L-serine + H(+) = a 1,2-diacyl-sn-glycero-3-phosphoethanolamine + CO2</text>
        <dbReference type="Rhea" id="RHEA:20828"/>
        <dbReference type="ChEBI" id="CHEBI:15378"/>
        <dbReference type="ChEBI" id="CHEBI:16526"/>
        <dbReference type="ChEBI" id="CHEBI:57262"/>
        <dbReference type="ChEBI" id="CHEBI:64612"/>
        <dbReference type="EC" id="4.1.1.65"/>
    </reaction>
</comment>
<comment type="cofactor">
    <cofactor evidence="1">
        <name>pyruvate</name>
        <dbReference type="ChEBI" id="CHEBI:15361"/>
    </cofactor>
    <text evidence="1">Binds 1 pyruvoyl group covalently per subunit.</text>
</comment>
<comment type="pathway">
    <text evidence="1">Phospholipid metabolism; phosphatidylethanolamine biosynthesis; phosphatidylethanolamine from CDP-diacylglycerol: step 2/2.</text>
</comment>
<comment type="subunit">
    <text evidence="1">Heterodimer of a large membrane-associated beta subunit and a small pyruvoyl-containing alpha subunit.</text>
</comment>
<comment type="subcellular location">
    <subcellularLocation>
        <location evidence="1">Cell membrane</location>
        <topology evidence="1">Peripheral membrane protein</topology>
    </subcellularLocation>
</comment>
<comment type="PTM">
    <text evidence="1">Is synthesized initially as an inactive proenzyme. Formation of the active enzyme involves a self-maturation process in which the active site pyruvoyl group is generated from an internal serine residue via an autocatalytic post-translational modification. Two non-identical subunits are generated from the proenzyme in this reaction, and the pyruvate is formed at the N-terminus of the alpha chain, which is derived from the carboxyl end of the proenzyme. The post-translation cleavage follows an unusual pathway, termed non-hydrolytic serinolysis, in which the side chain hydroxyl group of the serine supplies its oxygen atom to form the C-terminus of the beta chain, while the remainder of the serine residue undergoes an oxidative deamination to produce ammonia and the pyruvoyl prosthetic group on the alpha chain.</text>
</comment>
<comment type="similarity">
    <text evidence="1">Belongs to the phosphatidylserine decarboxylase family. PSD-A subfamily.</text>
</comment>